<comment type="function">
    <text evidence="1">Catalyzes a reversible aldol reaction between acetaldehyde and D-glyceraldehyde 3-phosphate to generate 2-deoxy-D-ribose 5-phosphate.</text>
</comment>
<comment type="catalytic activity">
    <reaction evidence="1">
        <text>2-deoxy-D-ribose 5-phosphate = D-glyceraldehyde 3-phosphate + acetaldehyde</text>
        <dbReference type="Rhea" id="RHEA:12821"/>
        <dbReference type="ChEBI" id="CHEBI:15343"/>
        <dbReference type="ChEBI" id="CHEBI:59776"/>
        <dbReference type="ChEBI" id="CHEBI:62877"/>
        <dbReference type="EC" id="4.1.2.4"/>
    </reaction>
</comment>
<comment type="pathway">
    <text evidence="1">Carbohydrate degradation; 2-deoxy-D-ribose 1-phosphate degradation; D-glyceraldehyde 3-phosphate and acetaldehyde from 2-deoxy-alpha-D-ribose 1-phosphate: step 2/2.</text>
</comment>
<comment type="subcellular location">
    <subcellularLocation>
        <location evidence="1">Cytoplasm</location>
    </subcellularLocation>
</comment>
<comment type="similarity">
    <text evidence="1">Belongs to the DeoC/FbaB aldolase family. DeoC type 1 subfamily.</text>
</comment>
<proteinExistence type="inferred from homology"/>
<feature type="chain" id="PRO_0000231566" description="Deoxyribose-phosphate aldolase">
    <location>
        <begin position="1"/>
        <end position="220"/>
    </location>
</feature>
<feature type="active site" description="Proton donor/acceptor" evidence="1">
    <location>
        <position position="89"/>
    </location>
</feature>
<feature type="active site" description="Schiff-base intermediate with acetaldehyde" evidence="1">
    <location>
        <position position="151"/>
    </location>
</feature>
<feature type="active site" description="Proton donor/acceptor" evidence="1">
    <location>
        <position position="180"/>
    </location>
</feature>
<reference key="1">
    <citation type="journal article" date="2005" name="Proc. Natl. Acad. Sci. U.S.A.">
        <title>Whole genome sequence of Staphylococcus saprophyticus reveals the pathogenesis of uncomplicated urinary tract infection.</title>
        <authorList>
            <person name="Kuroda M."/>
            <person name="Yamashita A."/>
            <person name="Hirakawa H."/>
            <person name="Kumano M."/>
            <person name="Morikawa K."/>
            <person name="Higashide M."/>
            <person name="Maruyama A."/>
            <person name="Inose Y."/>
            <person name="Matoba K."/>
            <person name="Toh H."/>
            <person name="Kuhara S."/>
            <person name="Hattori M."/>
            <person name="Ohta T."/>
        </authorList>
    </citation>
    <scope>NUCLEOTIDE SEQUENCE [LARGE SCALE GENOMIC DNA]</scope>
    <source>
        <strain>ATCC 15305 / DSM 20229 / NCIMB 8711 / NCTC 7292 / S-41</strain>
    </source>
</reference>
<evidence type="ECO:0000255" key="1">
    <source>
        <dbReference type="HAMAP-Rule" id="MF_00114"/>
    </source>
</evidence>
<sequence>MNYAKYIDHTLLKPESTRNQIDKIIEEAKAFNFKSICINPTHVKYAAEQLKGSDVLVCTVIGFPLGASTTETKIFETKDAINKGASEVDMVINIGALKDGRFEDVQKDIEGVVGAANGKTVKVIIETCLLTDEEKVKASELSKVAGADFVKTSTGFAGGGATPEDVKLMKDTVGDDLEVKASGGVRNLEDFNHMLEAGATRIGASAGVEIVQGLESDSDY</sequence>
<organism>
    <name type="scientific">Staphylococcus saprophyticus subsp. saprophyticus (strain ATCC 15305 / DSM 20229 / NCIMB 8711 / NCTC 7292 / S-41)</name>
    <dbReference type="NCBI Taxonomy" id="342451"/>
    <lineage>
        <taxon>Bacteria</taxon>
        <taxon>Bacillati</taxon>
        <taxon>Bacillota</taxon>
        <taxon>Bacilli</taxon>
        <taxon>Bacillales</taxon>
        <taxon>Staphylococcaceae</taxon>
        <taxon>Staphylococcus</taxon>
    </lineage>
</organism>
<protein>
    <recommendedName>
        <fullName evidence="1">Deoxyribose-phosphate aldolase</fullName>
        <shortName evidence="1">DERA</shortName>
        <ecNumber evidence="1">4.1.2.4</ecNumber>
    </recommendedName>
    <alternativeName>
        <fullName evidence="1">2-deoxy-D-ribose 5-phosphate aldolase</fullName>
    </alternativeName>
    <alternativeName>
        <fullName evidence="1">Phosphodeoxyriboaldolase</fullName>
        <shortName evidence="1">Deoxyriboaldolase</shortName>
    </alternativeName>
</protein>
<dbReference type="EC" id="4.1.2.4" evidence="1"/>
<dbReference type="EMBL" id="AP008934">
    <property type="protein sequence ID" value="BAE17892.1"/>
    <property type="molecule type" value="Genomic_DNA"/>
</dbReference>
<dbReference type="RefSeq" id="WP_011302653.1">
    <property type="nucleotide sequence ID" value="NC_007350.1"/>
</dbReference>
<dbReference type="SMR" id="Q49Z84"/>
<dbReference type="GeneID" id="3615812"/>
<dbReference type="KEGG" id="ssp:SSP0747"/>
<dbReference type="PATRIC" id="fig|342451.11.peg.749"/>
<dbReference type="eggNOG" id="COG0274">
    <property type="taxonomic scope" value="Bacteria"/>
</dbReference>
<dbReference type="HOGENOM" id="CLU_053595_0_1_9"/>
<dbReference type="OrthoDB" id="9778711at2"/>
<dbReference type="UniPathway" id="UPA00002">
    <property type="reaction ID" value="UER00468"/>
</dbReference>
<dbReference type="Proteomes" id="UP000006371">
    <property type="component" value="Chromosome"/>
</dbReference>
<dbReference type="GO" id="GO:0005737">
    <property type="term" value="C:cytoplasm"/>
    <property type="evidence" value="ECO:0007669"/>
    <property type="project" value="UniProtKB-SubCell"/>
</dbReference>
<dbReference type="GO" id="GO:0004139">
    <property type="term" value="F:deoxyribose-phosphate aldolase activity"/>
    <property type="evidence" value="ECO:0007669"/>
    <property type="project" value="UniProtKB-UniRule"/>
</dbReference>
<dbReference type="GO" id="GO:0006018">
    <property type="term" value="P:2-deoxyribose 1-phosphate catabolic process"/>
    <property type="evidence" value="ECO:0007669"/>
    <property type="project" value="UniProtKB-UniRule"/>
</dbReference>
<dbReference type="GO" id="GO:0016052">
    <property type="term" value="P:carbohydrate catabolic process"/>
    <property type="evidence" value="ECO:0007669"/>
    <property type="project" value="TreeGrafter"/>
</dbReference>
<dbReference type="GO" id="GO:0009264">
    <property type="term" value="P:deoxyribonucleotide catabolic process"/>
    <property type="evidence" value="ECO:0007669"/>
    <property type="project" value="InterPro"/>
</dbReference>
<dbReference type="CDD" id="cd00959">
    <property type="entry name" value="DeoC"/>
    <property type="match status" value="1"/>
</dbReference>
<dbReference type="FunFam" id="3.20.20.70:FF:000044">
    <property type="entry name" value="Deoxyribose-phosphate aldolase"/>
    <property type="match status" value="1"/>
</dbReference>
<dbReference type="Gene3D" id="3.20.20.70">
    <property type="entry name" value="Aldolase class I"/>
    <property type="match status" value="1"/>
</dbReference>
<dbReference type="HAMAP" id="MF_00114">
    <property type="entry name" value="DeoC_type1"/>
    <property type="match status" value="1"/>
</dbReference>
<dbReference type="InterPro" id="IPR013785">
    <property type="entry name" value="Aldolase_TIM"/>
</dbReference>
<dbReference type="InterPro" id="IPR011343">
    <property type="entry name" value="DeoC"/>
</dbReference>
<dbReference type="InterPro" id="IPR002915">
    <property type="entry name" value="DeoC/FbaB/LacD_aldolase"/>
</dbReference>
<dbReference type="InterPro" id="IPR028581">
    <property type="entry name" value="DeoC_typeI"/>
</dbReference>
<dbReference type="NCBIfam" id="TIGR00126">
    <property type="entry name" value="deoC"/>
    <property type="match status" value="1"/>
</dbReference>
<dbReference type="PANTHER" id="PTHR10889">
    <property type="entry name" value="DEOXYRIBOSE-PHOSPHATE ALDOLASE"/>
    <property type="match status" value="1"/>
</dbReference>
<dbReference type="PANTHER" id="PTHR10889:SF1">
    <property type="entry name" value="DEOXYRIBOSE-PHOSPHATE ALDOLASE"/>
    <property type="match status" value="1"/>
</dbReference>
<dbReference type="Pfam" id="PF01791">
    <property type="entry name" value="DeoC"/>
    <property type="match status" value="1"/>
</dbReference>
<dbReference type="PIRSF" id="PIRSF001357">
    <property type="entry name" value="DeoC"/>
    <property type="match status" value="1"/>
</dbReference>
<dbReference type="SMART" id="SM01133">
    <property type="entry name" value="DeoC"/>
    <property type="match status" value="1"/>
</dbReference>
<dbReference type="SUPFAM" id="SSF51569">
    <property type="entry name" value="Aldolase"/>
    <property type="match status" value="1"/>
</dbReference>
<name>DEOC_STAS1</name>
<gene>
    <name evidence="1" type="primary">deoC</name>
    <name type="ordered locus">SSP0747</name>
</gene>
<accession>Q49Z84</accession>
<keyword id="KW-0963">Cytoplasm</keyword>
<keyword id="KW-0456">Lyase</keyword>
<keyword id="KW-1185">Reference proteome</keyword>
<keyword id="KW-0704">Schiff base</keyword>